<feature type="signal peptide" evidence="1">
    <location>
        <begin position="1"/>
        <end position="21"/>
    </location>
</feature>
<feature type="chain" id="PRO_0000000324" description="Acetylcholine receptor subunit delta">
    <location>
        <begin position="22"/>
        <end position="517"/>
    </location>
</feature>
<feature type="topological domain" description="Extracellular" evidence="4">
    <location>
        <begin position="22"/>
        <end position="245"/>
    </location>
</feature>
<feature type="transmembrane region" description="Helical" evidence="4">
    <location>
        <begin position="246"/>
        <end position="270"/>
    </location>
</feature>
<feature type="transmembrane region" description="Helical" evidence="4">
    <location>
        <begin position="278"/>
        <end position="296"/>
    </location>
</feature>
<feature type="transmembrane region" description="Helical" evidence="4">
    <location>
        <begin position="312"/>
        <end position="333"/>
    </location>
</feature>
<feature type="topological domain" description="Cytoplasmic" evidence="4">
    <location>
        <begin position="334"/>
        <end position="471"/>
    </location>
</feature>
<feature type="transmembrane region" description="Helical" evidence="4">
    <location>
        <begin position="472"/>
        <end position="490"/>
    </location>
</feature>
<feature type="modified residue" description="Phosphotyrosine; by Tyr-kinases" evidence="1">
    <location>
        <position position="390"/>
    </location>
</feature>
<feature type="glycosylation site" description="N-linked (GlcNAc...) asparagine" evidence="4">
    <location>
        <position position="97"/>
    </location>
</feature>
<feature type="glycosylation site" description="N-linked (GlcNAc...) asparagine" evidence="4">
    <location>
        <position position="164"/>
    </location>
</feature>
<feature type="glycosylation site" description="N-linked (GlcNAc...) asparagine" evidence="4">
    <location>
        <position position="190"/>
    </location>
</feature>
<feature type="disulfide bond" evidence="1">
    <location>
        <begin position="151"/>
        <end position="165"/>
    </location>
</feature>
<feature type="helix" evidence="6">
    <location>
        <begin position="275"/>
        <end position="297"/>
    </location>
</feature>
<reference key="1">
    <citation type="journal article" date="1990" name="Eur. J. Biochem.">
        <title>Primary structure and functional expression of the alpha-, beta-, gamma-, delta- and epsilon-subunits of the acetylcholine receptor from rat muscle.</title>
        <authorList>
            <person name="Witzemann V."/>
            <person name="Stein E."/>
            <person name="Barg B."/>
            <person name="Konno T."/>
            <person name="Koenen M."/>
            <person name="Kues W."/>
            <person name="Criado M."/>
            <person name="Hofmann M."/>
            <person name="Sakmann B."/>
        </authorList>
    </citation>
    <scope>NUCLEOTIDE SEQUENCE</scope>
    <source>
        <tissue>Muscle</tissue>
    </source>
</reference>
<reference key="2">
    <citation type="journal article" date="1992" name="Development">
        <title>A 102 base pair sequence of the nicotinic acetylcholine receptor delta-subunit gene confers regulation by muscle electrical activity.</title>
        <authorList>
            <person name="Chahine K.G."/>
            <person name="Walke W."/>
            <person name="Goldman D.J."/>
        </authorList>
    </citation>
    <scope>NUCLEOTIDE SEQUENCE OF 1-17</scope>
</reference>
<reference key="3">
    <citation type="journal article" date="1999" name="Nat. Struct. Biol.">
        <title>Structures of the M2 channel-lining segments from nicotinic acetylcholine and NMDA receptors by NMR spectroscopy.</title>
        <authorList>
            <person name="Opella S.J."/>
            <person name="Marassi F.M."/>
            <person name="Gesell J.J."/>
            <person name="Valente A.P."/>
            <person name="Kim Y."/>
            <person name="Oblatt-Montal M."/>
            <person name="Montal M."/>
        </authorList>
    </citation>
    <scope>STRUCTURE BY NMR OF 276-298</scope>
</reference>
<evidence type="ECO:0000250" key="1"/>
<evidence type="ECO:0000250" key="2">
    <source>
        <dbReference type="UniProtKB" id="P04759"/>
    </source>
</evidence>
<evidence type="ECO:0000250" key="3">
    <source>
        <dbReference type="UniProtKB" id="Q07001"/>
    </source>
</evidence>
<evidence type="ECO:0000255" key="4"/>
<evidence type="ECO:0000305" key="5"/>
<evidence type="ECO:0007829" key="6">
    <source>
        <dbReference type="PDB" id="1A11"/>
    </source>
</evidence>
<gene>
    <name type="primary">Chrnd</name>
    <name type="synonym">Acrd</name>
</gene>
<comment type="function">
    <text>After binding acetylcholine, the AChR responds by an extensive change in conformation that affects all subunits and leads to opening of an ion-conducting channel across the plasma membrane.</text>
</comment>
<comment type="catalytic activity">
    <reaction evidence="2">
        <text>K(+)(in) = K(+)(out)</text>
        <dbReference type="Rhea" id="RHEA:29463"/>
        <dbReference type="ChEBI" id="CHEBI:29103"/>
    </reaction>
</comment>
<comment type="catalytic activity">
    <reaction evidence="2">
        <text>Na(+)(in) = Na(+)(out)</text>
        <dbReference type="Rhea" id="RHEA:34963"/>
        <dbReference type="ChEBI" id="CHEBI:29101"/>
    </reaction>
</comment>
<comment type="subunit">
    <text evidence="3">Pentamer of two alpha chains, and one each of the beta, delta, and gamma (in immature muscle) or epsilon (in mature muscle) chains. The muscle heteropentamer composed of alpha-1, beta-1, delta, epsilon subunits interacts with the alpha-conotoxin ImII (By similarity).</text>
</comment>
<comment type="subcellular location">
    <subcellularLocation>
        <location>Postsynaptic cell membrane</location>
        <topology>Multi-pass membrane protein</topology>
    </subcellularLocation>
    <subcellularLocation>
        <location>Cell membrane</location>
        <topology>Multi-pass membrane protein</topology>
    </subcellularLocation>
</comment>
<comment type="similarity">
    <text evidence="5">Belongs to the ligand-gated ion channel (TC 1.A.9) family. Acetylcholine receptor (TC 1.A.9.1) subfamily. Delta/CHRND sub-subfamily.</text>
</comment>
<keyword id="KW-0002">3D-structure</keyword>
<keyword id="KW-1003">Cell membrane</keyword>
<keyword id="KW-1015">Disulfide bond</keyword>
<keyword id="KW-0325">Glycoprotein</keyword>
<keyword id="KW-0407">Ion channel</keyword>
<keyword id="KW-0406">Ion transport</keyword>
<keyword id="KW-1071">Ligand-gated ion channel</keyword>
<keyword id="KW-0472">Membrane</keyword>
<keyword id="KW-0597">Phosphoprotein</keyword>
<keyword id="KW-0628">Postsynaptic cell membrane</keyword>
<keyword id="KW-0675">Receptor</keyword>
<keyword id="KW-1185">Reference proteome</keyword>
<keyword id="KW-0732">Signal</keyword>
<keyword id="KW-0770">Synapse</keyword>
<keyword id="KW-0812">Transmembrane</keyword>
<keyword id="KW-1133">Transmembrane helix</keyword>
<keyword id="KW-0813">Transport</keyword>
<proteinExistence type="evidence at protein level"/>
<dbReference type="EMBL" id="X74835">
    <property type="protein sequence ID" value="CAA52829.1"/>
    <property type="molecule type" value="mRNA"/>
</dbReference>
<dbReference type="EMBL" id="X66531">
    <property type="protein sequence ID" value="CAA47142.1"/>
    <property type="molecule type" value="Genomic_DNA"/>
</dbReference>
<dbReference type="PIR" id="S13875">
    <property type="entry name" value="S13875"/>
</dbReference>
<dbReference type="RefSeq" id="NP_062171.1">
    <property type="nucleotide sequence ID" value="NM_019298.1"/>
</dbReference>
<dbReference type="PDB" id="1A11">
    <property type="method" value="NMR"/>
    <property type="chains" value="A=276-298"/>
</dbReference>
<dbReference type="PDB" id="1CEK">
    <property type="method" value="NMR"/>
    <property type="chains" value="A=276-298"/>
</dbReference>
<dbReference type="PDBsum" id="1A11"/>
<dbReference type="PDBsum" id="1CEK"/>
<dbReference type="SMR" id="P25110"/>
<dbReference type="ComplexPortal" id="CPX-253">
    <property type="entry name" value="Muscle-type nicotinic acetylcholine receptor complex, alpha1-beta1-delta-gamma"/>
</dbReference>
<dbReference type="ComplexPortal" id="CPX-258">
    <property type="entry name" value="Muscle-type nicotinic acetylcholine receptor complex, alpha1-beta1-delta-epsilon"/>
</dbReference>
<dbReference type="FunCoup" id="P25110">
    <property type="interactions" value="34"/>
</dbReference>
<dbReference type="STRING" id="10116.ENSRNOP00000026504"/>
<dbReference type="BindingDB" id="P25110"/>
<dbReference type="ChEMBL" id="CHEMBL3885509"/>
<dbReference type="ChEMBL" id="CHEMBL4523658"/>
<dbReference type="GlyCosmos" id="P25110">
    <property type="glycosylation" value="3 sites, No reported glycans"/>
</dbReference>
<dbReference type="GlyGen" id="P25110">
    <property type="glycosylation" value="3 sites"/>
</dbReference>
<dbReference type="iPTMnet" id="P25110"/>
<dbReference type="PhosphoSitePlus" id="P25110"/>
<dbReference type="PaxDb" id="10116-ENSRNOP00000026504"/>
<dbReference type="Ensembl" id="ENSRNOT00000026504.7">
    <property type="protein sequence ID" value="ENSRNOP00000026504.5"/>
    <property type="gene ID" value="ENSRNOG00000019527.7"/>
</dbReference>
<dbReference type="GeneID" id="54240"/>
<dbReference type="KEGG" id="rno:54240"/>
<dbReference type="UCSC" id="RGD:2352">
    <property type="organism name" value="rat"/>
</dbReference>
<dbReference type="AGR" id="RGD:2352"/>
<dbReference type="CTD" id="1144"/>
<dbReference type="RGD" id="2352">
    <property type="gene designation" value="Chrnd"/>
</dbReference>
<dbReference type="eggNOG" id="KOG3645">
    <property type="taxonomic scope" value="Eukaryota"/>
</dbReference>
<dbReference type="GeneTree" id="ENSGT00940000159794"/>
<dbReference type="HOGENOM" id="CLU_018074_1_4_1"/>
<dbReference type="InParanoid" id="P25110"/>
<dbReference type="OMA" id="NFIVSHM"/>
<dbReference type="OrthoDB" id="5975154at2759"/>
<dbReference type="PhylomeDB" id="P25110"/>
<dbReference type="Reactome" id="R-RNO-629587">
    <property type="pathway name" value="Highly sodium permeable postsynaptic acetylcholine nicotinic receptors"/>
</dbReference>
<dbReference type="EvolutionaryTrace" id="P25110"/>
<dbReference type="PRO" id="PR:P25110"/>
<dbReference type="Proteomes" id="UP000002494">
    <property type="component" value="Chromosome 9"/>
</dbReference>
<dbReference type="Bgee" id="ENSRNOG00000019527">
    <property type="expression patterns" value="Expressed in skeletal muscle tissue and 4 other cell types or tissues"/>
</dbReference>
<dbReference type="GO" id="GO:0005892">
    <property type="term" value="C:acetylcholine-gated channel complex"/>
    <property type="evidence" value="ECO:0000314"/>
    <property type="project" value="RGD"/>
</dbReference>
<dbReference type="GO" id="GO:0031594">
    <property type="term" value="C:neuromuscular junction"/>
    <property type="evidence" value="ECO:0000266"/>
    <property type="project" value="RGD"/>
</dbReference>
<dbReference type="GO" id="GO:0043005">
    <property type="term" value="C:neuron projection"/>
    <property type="evidence" value="ECO:0000318"/>
    <property type="project" value="GO_Central"/>
</dbReference>
<dbReference type="GO" id="GO:0005886">
    <property type="term" value="C:plasma membrane"/>
    <property type="evidence" value="ECO:0000266"/>
    <property type="project" value="RGD"/>
</dbReference>
<dbReference type="GO" id="GO:0099634">
    <property type="term" value="C:postsynaptic specialization membrane"/>
    <property type="evidence" value="ECO:0000266"/>
    <property type="project" value="RGD"/>
</dbReference>
<dbReference type="GO" id="GO:0045202">
    <property type="term" value="C:synapse"/>
    <property type="evidence" value="ECO:0000318"/>
    <property type="project" value="GO_Central"/>
</dbReference>
<dbReference type="GO" id="GO:0042166">
    <property type="term" value="F:acetylcholine binding"/>
    <property type="evidence" value="ECO:0007669"/>
    <property type="project" value="Ensembl"/>
</dbReference>
<dbReference type="GO" id="GO:0015464">
    <property type="term" value="F:acetylcholine receptor activity"/>
    <property type="evidence" value="ECO:0000318"/>
    <property type="project" value="GO_Central"/>
</dbReference>
<dbReference type="GO" id="GO:0022848">
    <property type="term" value="F:acetylcholine-gated monoatomic cation-selective channel activity"/>
    <property type="evidence" value="ECO:0000314"/>
    <property type="project" value="RGD"/>
</dbReference>
<dbReference type="GO" id="GO:0015276">
    <property type="term" value="F:ligand-gated monoatomic ion channel activity"/>
    <property type="evidence" value="ECO:0000314"/>
    <property type="project" value="RGD"/>
</dbReference>
<dbReference type="GO" id="GO:1904315">
    <property type="term" value="F:transmitter-gated monoatomic ion channel activity involved in regulation of postsynaptic membrane potential"/>
    <property type="evidence" value="ECO:0000266"/>
    <property type="project" value="RGD"/>
</dbReference>
<dbReference type="GO" id="GO:0095500">
    <property type="term" value="P:acetylcholine receptor signaling pathway"/>
    <property type="evidence" value="ECO:0000318"/>
    <property type="project" value="GO_Central"/>
</dbReference>
<dbReference type="GO" id="GO:0007268">
    <property type="term" value="P:chemical synaptic transmission"/>
    <property type="evidence" value="ECO:0000318"/>
    <property type="project" value="GO_Central"/>
</dbReference>
<dbReference type="GO" id="GO:0051899">
    <property type="term" value="P:membrane depolarization"/>
    <property type="evidence" value="ECO:0000318"/>
    <property type="project" value="GO_Central"/>
</dbReference>
<dbReference type="GO" id="GO:0006812">
    <property type="term" value="P:monoatomic cation transport"/>
    <property type="evidence" value="ECO:0000314"/>
    <property type="project" value="RGD"/>
</dbReference>
<dbReference type="GO" id="GO:0034220">
    <property type="term" value="P:monoatomic ion transmembrane transport"/>
    <property type="evidence" value="ECO:0000318"/>
    <property type="project" value="GO_Central"/>
</dbReference>
<dbReference type="GO" id="GO:0050881">
    <property type="term" value="P:musculoskeletal movement"/>
    <property type="evidence" value="ECO:0000266"/>
    <property type="project" value="RGD"/>
</dbReference>
<dbReference type="GO" id="GO:0042391">
    <property type="term" value="P:regulation of membrane potential"/>
    <property type="evidence" value="ECO:0000266"/>
    <property type="project" value="RGD"/>
</dbReference>
<dbReference type="GO" id="GO:0003009">
    <property type="term" value="P:skeletal muscle contraction"/>
    <property type="evidence" value="ECO:0000314"/>
    <property type="project" value="RGD"/>
</dbReference>
<dbReference type="GO" id="GO:0048630">
    <property type="term" value="P:skeletal muscle tissue growth"/>
    <property type="evidence" value="ECO:0000266"/>
    <property type="project" value="RGD"/>
</dbReference>
<dbReference type="CDD" id="cd19064">
    <property type="entry name" value="LGIC_TM_nAChR"/>
    <property type="match status" value="1"/>
</dbReference>
<dbReference type="FunFam" id="1.20.58.390:FF:000029">
    <property type="entry name" value="acetylcholine receptor subunit delta isoform X1"/>
    <property type="match status" value="1"/>
</dbReference>
<dbReference type="FunFam" id="1.20.58.390:FF:000010">
    <property type="entry name" value="Nicotinic acetylcholine receptor subunit epsilon"/>
    <property type="match status" value="1"/>
</dbReference>
<dbReference type="FunFam" id="2.70.170.10:FF:000012">
    <property type="entry name" value="Nicotinic acetylcholine receptor subunit gamma"/>
    <property type="match status" value="1"/>
</dbReference>
<dbReference type="Gene3D" id="2.70.170.10">
    <property type="entry name" value="Neurotransmitter-gated ion-channel ligand-binding domain"/>
    <property type="match status" value="1"/>
</dbReference>
<dbReference type="Gene3D" id="1.20.58.390">
    <property type="entry name" value="Neurotransmitter-gated ion-channel transmembrane domain"/>
    <property type="match status" value="2"/>
</dbReference>
<dbReference type="InterPro" id="IPR006202">
    <property type="entry name" value="Neur_chan_lig-bd"/>
</dbReference>
<dbReference type="InterPro" id="IPR036734">
    <property type="entry name" value="Neur_chan_lig-bd_sf"/>
</dbReference>
<dbReference type="InterPro" id="IPR006201">
    <property type="entry name" value="Neur_channel"/>
</dbReference>
<dbReference type="InterPro" id="IPR036719">
    <property type="entry name" value="Neuro-gated_channel_TM_sf"/>
</dbReference>
<dbReference type="InterPro" id="IPR038050">
    <property type="entry name" value="Neuro_actylchol_rec"/>
</dbReference>
<dbReference type="InterPro" id="IPR006029">
    <property type="entry name" value="Neurotrans-gated_channel_TM"/>
</dbReference>
<dbReference type="InterPro" id="IPR018000">
    <property type="entry name" value="Neurotransmitter_ion_chnl_CS"/>
</dbReference>
<dbReference type="InterPro" id="IPR002394">
    <property type="entry name" value="Nicotinic_acetylcholine_rcpt"/>
</dbReference>
<dbReference type="NCBIfam" id="TIGR00860">
    <property type="entry name" value="LIC"/>
    <property type="match status" value="1"/>
</dbReference>
<dbReference type="PANTHER" id="PTHR18945">
    <property type="entry name" value="NEUROTRANSMITTER GATED ION CHANNEL"/>
    <property type="match status" value="1"/>
</dbReference>
<dbReference type="Pfam" id="PF02931">
    <property type="entry name" value="Neur_chan_LBD"/>
    <property type="match status" value="1"/>
</dbReference>
<dbReference type="Pfam" id="PF02932">
    <property type="entry name" value="Neur_chan_memb"/>
    <property type="match status" value="1"/>
</dbReference>
<dbReference type="PRINTS" id="PR00254">
    <property type="entry name" value="NICOTINICR"/>
</dbReference>
<dbReference type="PRINTS" id="PR00252">
    <property type="entry name" value="NRIONCHANNEL"/>
</dbReference>
<dbReference type="SUPFAM" id="SSF90112">
    <property type="entry name" value="Neurotransmitter-gated ion-channel transmembrane pore"/>
    <property type="match status" value="1"/>
</dbReference>
<dbReference type="SUPFAM" id="SSF63712">
    <property type="entry name" value="Nicotinic receptor ligand binding domain-like"/>
    <property type="match status" value="1"/>
</dbReference>
<dbReference type="PROSITE" id="PS00236">
    <property type="entry name" value="NEUROTR_ION_CHANNEL"/>
    <property type="match status" value="1"/>
</dbReference>
<protein>
    <recommendedName>
        <fullName>Acetylcholine receptor subunit delta</fullName>
    </recommendedName>
</protein>
<organism>
    <name type="scientific">Rattus norvegicus</name>
    <name type="common">Rat</name>
    <dbReference type="NCBI Taxonomy" id="10116"/>
    <lineage>
        <taxon>Eukaryota</taxon>
        <taxon>Metazoa</taxon>
        <taxon>Chordata</taxon>
        <taxon>Craniata</taxon>
        <taxon>Vertebrata</taxon>
        <taxon>Euteleostomi</taxon>
        <taxon>Mammalia</taxon>
        <taxon>Eutheria</taxon>
        <taxon>Euarchontoglires</taxon>
        <taxon>Glires</taxon>
        <taxon>Rodentia</taxon>
        <taxon>Myomorpha</taxon>
        <taxon>Muroidea</taxon>
        <taxon>Muridae</taxon>
        <taxon>Murinae</taxon>
        <taxon>Rattus</taxon>
    </lineage>
</organism>
<accession>P25110</accession>
<name>ACHD_RAT</name>
<sequence>MAGPVPTLGLLAALVVCGSWGLNEEQRLIQHLFEEKGYNKELRPVARKEDIVDVALSLTLSNLISLKEVEETLTTNVWIDHAWIDSRLQWNANEFGNITVLRLPSDMVWLPEIVLENNNDGSFQISYACNVLVSDSGHVTWLPPAIFRSSCPISVTYFPFDWQNCSLKFSSLKYTAKEIRLSLKQEEEDNRSYPIEWIIIDPEGFTENGEWEIVHRAAKVNVDPSVPMDSTNHQDVTFYLIIRRKPLFYIINILVPCVLISFMINLVFYLPGDCGEKTSVAISVLLAQSVFLLLISKRLPATSMAIPLVGKFLLFGMVLVTMVVVICVIVLNIHFRTPSTHVLSEGVKKFFLETLPKLLHMSRPEEEDPGPRALIRRTSSLGYISKAEEYFSLKSRSDLMFEKQSERHGLARRLTTARKPPASSEQVQQELFNEMKPAVDGANFIVNHMRDQNSYNEEKDNWNQVARTVDRLCLFVVTPVMVVGTAWIFLQGVYNQPPPQPFPGDPFSYDEQDRRFI</sequence>